<protein>
    <recommendedName>
        <fullName evidence="7">FAD-dependent monooxygenase cdmI</fullName>
        <ecNumber evidence="6">1.-.-.-</ecNumber>
    </recommendedName>
    <alternativeName>
        <fullName evidence="7">chrodrimanin B biosynthesis cluster protein I</fullName>
    </alternativeName>
</protein>
<organism>
    <name type="scientific">Talaromyces verruculosus</name>
    <name type="common">Penicillium verruculosum</name>
    <dbReference type="NCBI Taxonomy" id="198730"/>
    <lineage>
        <taxon>Eukaryota</taxon>
        <taxon>Fungi</taxon>
        <taxon>Dikarya</taxon>
        <taxon>Ascomycota</taxon>
        <taxon>Pezizomycotina</taxon>
        <taxon>Eurotiomycetes</taxon>
        <taxon>Eurotiomycetidae</taxon>
        <taxon>Eurotiales</taxon>
        <taxon>Trichocomaceae</taxon>
        <taxon>Talaromyces</taxon>
        <taxon>Talaromyces sect. Talaromyces</taxon>
    </lineage>
</organism>
<comment type="function">
    <text evidence="6 9">FAD-dependent monooxygenase; part of the gene cluster that mediates the biosynthesis of chrodrimanin B, a meroterpenoid that acts as a potent blocker of insect GABA-gated chloride channels (PubMed:30417647). The first step of the pathway is the biosynthesis of 6-hydroxymellein by the polyketide synthase cdmE (PubMed:30417647). The prenyltransferase cdmH acts as a 6-hydroxymellein 5-farnesyltransferase and produces the hydrophobic metabolite verruculide C (PubMed:30417647). The FAD-dependent monooxygenase cdmI further converts verruculide C into verruculide B (PubMed:30417647). The terpene cyclase cdmG then produced the pentacyclic molecule 3-hydroxypentacecilide A, the backbone structure of chrodrimanin B, via folding the farnesyl moiety of the substrate into the chair-boat conformation (PubMed:30417647). The short-chain dehydrogenase/reductase cdmF functions as the 3-OH dehydrogenase that oxidizes the C-3 hydroxyl group of 3-hydroxypentacecilide A and produces chrodrimanin C, the dehydrogenated product of 3-hydroxypentacecilide A (PubMed:30417647). The cytochrome P450 monooxygenase cdmJ then accepts both 3-hydroxypentacecilide A and chrodrimanin C and functions as a C-7-beta-hydroxylase to produce respectively chrodrimanin H and chrodrimanin F (PubMed:30417647). The dioxygenase cdmA accepts chrodrimanin H to afford chrodrimanin E, which is further transformed to chrodrimanin A by the dioxygenase cdmD (PubMed:30417647). CdmA can also accept chrodrimanin C as substrate to convert it into verruculide A, which is further converted into chrodrimanin T by cdmD (PubMed:30417647). The last step of the biosynthesis is proposed to be performed by the acetyltransferase cdmC which acetylates chrodrimanin A to yield chrodrimanin B (Probable). The pathway may also lead to the production of additional shunt products, including chrodrimanins T and U (PubMed:30417647).</text>
</comment>
<comment type="catalytic activity">
    <reaction evidence="6">
        <text>verruculide C + AH2 + O2 = verruculide C epoxide + A + H2O</text>
        <dbReference type="Rhea" id="RHEA:65256"/>
        <dbReference type="ChEBI" id="CHEBI:13193"/>
        <dbReference type="ChEBI" id="CHEBI:15377"/>
        <dbReference type="ChEBI" id="CHEBI:15379"/>
        <dbReference type="ChEBI" id="CHEBI:17499"/>
        <dbReference type="ChEBI" id="CHEBI:156409"/>
        <dbReference type="ChEBI" id="CHEBI:156410"/>
    </reaction>
    <physiologicalReaction direction="left-to-right" evidence="6">
        <dbReference type="Rhea" id="RHEA:65257"/>
    </physiologicalReaction>
</comment>
<comment type="cofactor">
    <cofactor evidence="8">
        <name>FAD</name>
        <dbReference type="ChEBI" id="CHEBI:57692"/>
    </cofactor>
</comment>
<comment type="pathway">
    <text evidence="6">Secondary metabolite biosynthesis; terpenoid biosynthesis.</text>
</comment>
<comment type="subcellular location">
    <subcellularLocation>
        <location evidence="2">Membrane</location>
        <topology evidence="2">Single-pass membrane protein</topology>
    </subcellularLocation>
</comment>
<comment type="biotechnology">
    <text evidence="4 5">Compounds in the chrodrimanin family such as chrodrimanin A or verruculide A exhibit strong inhibitory activities against protein tyrosine phosphatase 1B (PTP1B) and therefore, they could potentially be developed into drugs for the treatment of type 2 diabetes or obesity (PubMed:26115570). Furthermore, chrodrimanin B, the end product of the pathway involving chrodrimanin A or verruculide A, does not exhibit the PTP1B inhibitory activity, while it functions as a potent blocker of insect GABA-gated chloride channels (PubMed:25902139).</text>
</comment>
<comment type="similarity">
    <text evidence="8">Belongs to the paxM FAD-dependent monooxygenase family.</text>
</comment>
<reference key="1">
    <citation type="journal article" date="2018" name="Org. Lett.">
        <title>Elucidation and heterologous reconstitution of chrodrimanin B biosynthesis.</title>
        <authorList>
            <person name="Bai T."/>
            <person name="Quan Z."/>
            <person name="Zhai R."/>
            <person name="Awakawa T."/>
            <person name="Matsuda Y."/>
            <person name="Abe I."/>
        </authorList>
    </citation>
    <scope>NUCLEOTIDE SEQUENCE [GENOMIC DNA]</scope>
    <scope>FUNCTION</scope>
    <scope>CATALYTIC ACTIVITY</scope>
    <scope>PATHWAY</scope>
    <source>
        <strain>TPU1311</strain>
    </source>
</reference>
<reference key="2">
    <citation type="journal article" date="2015" name="Bioorg. Med. Chem. Lett.">
        <title>Verruculides A and B, two new protein tyrosine phosphatase 1B inhibitors from an Indonesian ascidian-derived Penicillium verruculosum.</title>
        <authorList>
            <person name="Yamazaki H."/>
            <person name="Nakayama W."/>
            <person name="Takahashi O."/>
            <person name="Kirikoshi R."/>
            <person name="Izumikawa Y."/>
            <person name="Iwasaki K."/>
            <person name="Toraiwa K."/>
            <person name="Ukai K."/>
            <person name="Rotinsulu H."/>
            <person name="Wewengkang D.S."/>
            <person name="Sumilat D.A."/>
            <person name="Mangindaan R.E."/>
            <person name="Namikoshi M."/>
        </authorList>
    </citation>
    <scope>BIOTECHNOLOGY</scope>
</reference>
<reference key="3">
    <citation type="journal article" date="2015" name="PLoS ONE">
        <title>Meroterpenoid Chrodrimanins Are Selective and Potent Blockers of Insect GABA-Gated Chloride Channels.</title>
        <authorList>
            <person name="Xu Y."/>
            <person name="Furutani S."/>
            <person name="Ihara M."/>
            <person name="Ling Y."/>
            <person name="Yang X."/>
            <person name="Kai K."/>
            <person name="Hayashi H."/>
            <person name="Matsuda K."/>
        </authorList>
    </citation>
    <scope>BIOTECHNOLOGY</scope>
</reference>
<accession>A0A3G9GX61</accession>
<keyword id="KW-0274">FAD</keyword>
<keyword id="KW-0285">Flavoprotein</keyword>
<keyword id="KW-0325">Glycoprotein</keyword>
<keyword id="KW-0472">Membrane</keyword>
<keyword id="KW-0503">Monooxygenase</keyword>
<keyword id="KW-0560">Oxidoreductase</keyword>
<keyword id="KW-0812">Transmembrane</keyword>
<keyword id="KW-1133">Transmembrane helix</keyword>
<name>CDMI_TALVE</name>
<feature type="chain" id="PRO_0000449134" description="FAD-dependent monooxygenase cdmI">
    <location>
        <begin position="1"/>
        <end position="479"/>
    </location>
</feature>
<feature type="transmembrane region" description="Helical" evidence="2">
    <location>
        <begin position="453"/>
        <end position="473"/>
    </location>
</feature>
<feature type="binding site" evidence="1">
    <location>
        <position position="43"/>
    </location>
    <ligand>
        <name>FAD</name>
        <dbReference type="ChEBI" id="CHEBI:57692"/>
    </ligand>
</feature>
<feature type="binding site" evidence="1">
    <location>
        <position position="57"/>
    </location>
    <ligand>
        <name>FAD</name>
        <dbReference type="ChEBI" id="CHEBI:57692"/>
    </ligand>
</feature>
<feature type="binding site" evidence="1">
    <location>
        <position position="116"/>
    </location>
    <ligand>
        <name>FAD</name>
        <dbReference type="ChEBI" id="CHEBI:57692"/>
    </ligand>
</feature>
<feature type="binding site" evidence="1">
    <location>
        <position position="315"/>
    </location>
    <ligand>
        <name>FAD</name>
        <dbReference type="ChEBI" id="CHEBI:57692"/>
    </ligand>
</feature>
<feature type="binding site" evidence="1">
    <location>
        <position position="328"/>
    </location>
    <ligand>
        <name>FAD</name>
        <dbReference type="ChEBI" id="CHEBI:57692"/>
    </ligand>
</feature>
<feature type="glycosylation site" description="N-linked (GlcNAc...) asparagine" evidence="3">
    <location>
        <position position="156"/>
    </location>
</feature>
<feature type="glycosylation site" description="N-linked (GlcNAc...) asparagine" evidence="3">
    <location>
        <position position="198"/>
    </location>
</feature>
<sequence>MQNLGASMDNNKKFKVVIVGGSIAGLTLAHCLSKFGIDYVVLEKRREIAPQEGASVGIMPNGGRVLEQLGLFDDVERAIEPLSVAQLVYPDGFCSESEYPKKLCERFGFPLAFLDRQMLLESLYANLPDITRVKTNSAVIAVEHEDDRVRVLTTDNCSYEGHLVVGADGIHSTIRKEMWRAASSLHQGQVEDTNSMMNITYACVYGISSAHPLLKPGQQITCFNDGWSILSVVGKNGRTFWFLFLKLEREYKYNEAPKYTKEDAIANCDRLSAHTFWDTVTFGDVWSRREVFTMTPLEEGVFEQWSCGRIVCIGDSMHKFAPNIGQGANCAIEDAGELANALARIFNDREKGDGFKPSTPDLSNMLEQFQGKRISRIKALYKVARLAIRLQARDGLAMTLMGRYVMPYLGDKVADWASRDIADGAILEFLPPPERSGSGWQKYSQKSKKSNTPFILAVLAGLGFLLTMFKQQWEYHQDS</sequence>
<gene>
    <name evidence="7" type="primary">cdmI</name>
</gene>
<evidence type="ECO:0000250" key="1">
    <source>
        <dbReference type="UniProtKB" id="B8M9J8"/>
    </source>
</evidence>
<evidence type="ECO:0000255" key="2"/>
<evidence type="ECO:0000255" key="3">
    <source>
        <dbReference type="PROSITE-ProRule" id="PRU00498"/>
    </source>
</evidence>
<evidence type="ECO:0000269" key="4">
    <source>
    </source>
</evidence>
<evidence type="ECO:0000269" key="5">
    <source>
    </source>
</evidence>
<evidence type="ECO:0000269" key="6">
    <source>
    </source>
</evidence>
<evidence type="ECO:0000303" key="7">
    <source>
    </source>
</evidence>
<evidence type="ECO:0000305" key="8"/>
<evidence type="ECO:0000305" key="9">
    <source>
    </source>
</evidence>
<proteinExistence type="evidence at protein level"/>
<dbReference type="EC" id="1.-.-.-" evidence="6"/>
<dbReference type="EMBL" id="LC422696">
    <property type="protein sequence ID" value="BBG28488.1"/>
    <property type="molecule type" value="Genomic_DNA"/>
</dbReference>
<dbReference type="SMR" id="A0A3G9GX61"/>
<dbReference type="GlyCosmos" id="A0A3G9GX61">
    <property type="glycosylation" value="2 sites, No reported glycans"/>
</dbReference>
<dbReference type="UniPathway" id="UPA00213"/>
<dbReference type="GO" id="GO:0016020">
    <property type="term" value="C:membrane"/>
    <property type="evidence" value="ECO:0007669"/>
    <property type="project" value="UniProtKB-SubCell"/>
</dbReference>
<dbReference type="GO" id="GO:0071949">
    <property type="term" value="F:FAD binding"/>
    <property type="evidence" value="ECO:0007669"/>
    <property type="project" value="InterPro"/>
</dbReference>
<dbReference type="GO" id="GO:0004497">
    <property type="term" value="F:monooxygenase activity"/>
    <property type="evidence" value="ECO:0007669"/>
    <property type="project" value="UniProtKB-KW"/>
</dbReference>
<dbReference type="GO" id="GO:0016114">
    <property type="term" value="P:terpenoid biosynthetic process"/>
    <property type="evidence" value="ECO:0007669"/>
    <property type="project" value="UniProtKB-UniPathway"/>
</dbReference>
<dbReference type="Gene3D" id="3.50.50.60">
    <property type="entry name" value="FAD/NAD(P)-binding domain"/>
    <property type="match status" value="1"/>
</dbReference>
<dbReference type="InterPro" id="IPR002938">
    <property type="entry name" value="FAD-bd"/>
</dbReference>
<dbReference type="InterPro" id="IPR036188">
    <property type="entry name" value="FAD/NAD-bd_sf"/>
</dbReference>
<dbReference type="InterPro" id="IPR050562">
    <property type="entry name" value="FAD_mOase_fung"/>
</dbReference>
<dbReference type="PANTHER" id="PTHR47356:SF2">
    <property type="entry name" value="FAD-BINDING DOMAIN-CONTAINING PROTEIN-RELATED"/>
    <property type="match status" value="1"/>
</dbReference>
<dbReference type="PANTHER" id="PTHR47356">
    <property type="entry name" value="FAD-DEPENDENT MONOOXYGENASE ASQG-RELATED"/>
    <property type="match status" value="1"/>
</dbReference>
<dbReference type="Pfam" id="PF01494">
    <property type="entry name" value="FAD_binding_3"/>
    <property type="match status" value="1"/>
</dbReference>
<dbReference type="PRINTS" id="PR00420">
    <property type="entry name" value="RNGMNOXGNASE"/>
</dbReference>
<dbReference type="SUPFAM" id="SSF51905">
    <property type="entry name" value="FAD/NAD(P)-binding domain"/>
    <property type="match status" value="1"/>
</dbReference>